<keyword id="KW-0067">ATP-binding</keyword>
<keyword id="KW-0414">Isoprene biosynthesis</keyword>
<keyword id="KW-0418">Kinase</keyword>
<keyword id="KW-0547">Nucleotide-binding</keyword>
<keyword id="KW-0808">Transferase</keyword>
<protein>
    <recommendedName>
        <fullName evidence="1">4-diphosphocytidyl-2-C-methyl-D-erythritol kinase</fullName>
        <shortName evidence="1">CMK</shortName>
        <ecNumber evidence="1">2.7.1.148</ecNumber>
    </recommendedName>
    <alternativeName>
        <fullName evidence="1">4-(cytidine-5'-diphospho)-2-C-methyl-D-erythritol kinase</fullName>
    </alternativeName>
</protein>
<gene>
    <name evidence="1" type="primary">ispE</name>
    <name type="ordered locus">Rsph17025_2471</name>
</gene>
<evidence type="ECO:0000255" key="1">
    <source>
        <dbReference type="HAMAP-Rule" id="MF_00061"/>
    </source>
</evidence>
<sequence>MTEAFARAKINLTLHVTGQRPDGYHLLDSLVVFADVGDRVRTEPAEALSLAITGPQAVNLPVSDDNLVLRAARAMGGQGARITLEKHLPVASGIGGGSADAAATLKALAELWQRPLPEAAAVLRLGADVPVCLEGRAVRMAGVGEILEPLAGPLPPAWLVLANPGVSVPTPPVFKALARRDNPPMPERLPDWGSADELAAFLAAMRNDLEAPAIALAPEVAETRAALAAEPGCLIARMSGSGATCFGLFAEERPARAAAEALRAAHPGWWIEPARMAG</sequence>
<feature type="chain" id="PRO_1000007883" description="4-diphosphocytidyl-2-C-methyl-D-erythritol kinase">
    <location>
        <begin position="1"/>
        <end position="278"/>
    </location>
</feature>
<feature type="active site" evidence="1">
    <location>
        <position position="9"/>
    </location>
</feature>
<feature type="active site" evidence="1">
    <location>
        <position position="128"/>
    </location>
</feature>
<feature type="binding site" evidence="1">
    <location>
        <begin position="89"/>
        <end position="99"/>
    </location>
    <ligand>
        <name>ATP</name>
        <dbReference type="ChEBI" id="CHEBI:30616"/>
    </ligand>
</feature>
<comment type="function">
    <text evidence="1">Catalyzes the phosphorylation of the position 2 hydroxy group of 4-diphosphocytidyl-2C-methyl-D-erythritol.</text>
</comment>
<comment type="catalytic activity">
    <reaction evidence="1">
        <text>4-CDP-2-C-methyl-D-erythritol + ATP = 4-CDP-2-C-methyl-D-erythritol 2-phosphate + ADP + H(+)</text>
        <dbReference type="Rhea" id="RHEA:18437"/>
        <dbReference type="ChEBI" id="CHEBI:15378"/>
        <dbReference type="ChEBI" id="CHEBI:30616"/>
        <dbReference type="ChEBI" id="CHEBI:57823"/>
        <dbReference type="ChEBI" id="CHEBI:57919"/>
        <dbReference type="ChEBI" id="CHEBI:456216"/>
        <dbReference type="EC" id="2.7.1.148"/>
    </reaction>
</comment>
<comment type="pathway">
    <text evidence="1">Isoprenoid biosynthesis; isopentenyl diphosphate biosynthesis via DXP pathway; isopentenyl diphosphate from 1-deoxy-D-xylulose 5-phosphate: step 3/6.</text>
</comment>
<comment type="similarity">
    <text evidence="1">Belongs to the GHMP kinase family. IspE subfamily.</text>
</comment>
<reference key="1">
    <citation type="submission" date="2007-04" db="EMBL/GenBank/DDBJ databases">
        <title>Complete sequence of chromosome of Rhodobacter sphaeroides ATCC 17025.</title>
        <authorList>
            <consortium name="US DOE Joint Genome Institute"/>
            <person name="Copeland A."/>
            <person name="Lucas S."/>
            <person name="Lapidus A."/>
            <person name="Barry K."/>
            <person name="Detter J.C."/>
            <person name="Glavina del Rio T."/>
            <person name="Hammon N."/>
            <person name="Israni S."/>
            <person name="Dalin E."/>
            <person name="Tice H."/>
            <person name="Pitluck S."/>
            <person name="Chertkov O."/>
            <person name="Brettin T."/>
            <person name="Bruce D."/>
            <person name="Han C."/>
            <person name="Schmutz J."/>
            <person name="Larimer F."/>
            <person name="Land M."/>
            <person name="Hauser L."/>
            <person name="Kyrpides N."/>
            <person name="Kim E."/>
            <person name="Richardson P."/>
            <person name="Mackenzie C."/>
            <person name="Choudhary M."/>
            <person name="Donohue T.J."/>
            <person name="Kaplan S."/>
        </authorList>
    </citation>
    <scope>NUCLEOTIDE SEQUENCE [LARGE SCALE GENOMIC DNA]</scope>
    <source>
        <strain>ATCC 17025 / ATH 2.4.3</strain>
    </source>
</reference>
<name>ISPE_CERS5</name>
<dbReference type="EC" id="2.7.1.148" evidence="1"/>
<dbReference type="EMBL" id="CP000661">
    <property type="protein sequence ID" value="ABP71359.1"/>
    <property type="molecule type" value="Genomic_DNA"/>
</dbReference>
<dbReference type="SMR" id="A4WVE5"/>
<dbReference type="STRING" id="349102.Rsph17025_2471"/>
<dbReference type="KEGG" id="rsq:Rsph17025_2471"/>
<dbReference type="eggNOG" id="COG1947">
    <property type="taxonomic scope" value="Bacteria"/>
</dbReference>
<dbReference type="HOGENOM" id="CLU_053057_1_0_5"/>
<dbReference type="BioCyc" id="RSPH349102:G1G8M-2548-MONOMER"/>
<dbReference type="UniPathway" id="UPA00056">
    <property type="reaction ID" value="UER00094"/>
</dbReference>
<dbReference type="GO" id="GO:0050515">
    <property type="term" value="F:4-(cytidine 5'-diphospho)-2-C-methyl-D-erythritol kinase activity"/>
    <property type="evidence" value="ECO:0007669"/>
    <property type="project" value="UniProtKB-UniRule"/>
</dbReference>
<dbReference type="GO" id="GO:0005524">
    <property type="term" value="F:ATP binding"/>
    <property type="evidence" value="ECO:0007669"/>
    <property type="project" value="UniProtKB-UniRule"/>
</dbReference>
<dbReference type="GO" id="GO:0019288">
    <property type="term" value="P:isopentenyl diphosphate biosynthetic process, methylerythritol 4-phosphate pathway"/>
    <property type="evidence" value="ECO:0007669"/>
    <property type="project" value="UniProtKB-UniRule"/>
</dbReference>
<dbReference type="GO" id="GO:0016114">
    <property type="term" value="P:terpenoid biosynthetic process"/>
    <property type="evidence" value="ECO:0007669"/>
    <property type="project" value="InterPro"/>
</dbReference>
<dbReference type="Gene3D" id="3.30.230.10">
    <property type="match status" value="1"/>
</dbReference>
<dbReference type="Gene3D" id="3.30.70.890">
    <property type="entry name" value="GHMP kinase, C-terminal domain"/>
    <property type="match status" value="1"/>
</dbReference>
<dbReference type="HAMAP" id="MF_00061">
    <property type="entry name" value="IspE"/>
    <property type="match status" value="1"/>
</dbReference>
<dbReference type="InterPro" id="IPR013750">
    <property type="entry name" value="GHMP_kinase_C_dom"/>
</dbReference>
<dbReference type="InterPro" id="IPR036554">
    <property type="entry name" value="GHMP_kinase_C_sf"/>
</dbReference>
<dbReference type="InterPro" id="IPR006204">
    <property type="entry name" value="GHMP_kinase_N_dom"/>
</dbReference>
<dbReference type="InterPro" id="IPR004424">
    <property type="entry name" value="IspE"/>
</dbReference>
<dbReference type="InterPro" id="IPR020568">
    <property type="entry name" value="Ribosomal_Su5_D2-typ_SF"/>
</dbReference>
<dbReference type="InterPro" id="IPR014721">
    <property type="entry name" value="Ribsml_uS5_D2-typ_fold_subgr"/>
</dbReference>
<dbReference type="NCBIfam" id="TIGR00154">
    <property type="entry name" value="ispE"/>
    <property type="match status" value="1"/>
</dbReference>
<dbReference type="NCBIfam" id="NF011202">
    <property type="entry name" value="PRK14608.1"/>
    <property type="match status" value="1"/>
</dbReference>
<dbReference type="PANTHER" id="PTHR43527">
    <property type="entry name" value="4-DIPHOSPHOCYTIDYL-2-C-METHYL-D-ERYTHRITOL KINASE, CHLOROPLASTIC"/>
    <property type="match status" value="1"/>
</dbReference>
<dbReference type="PANTHER" id="PTHR43527:SF2">
    <property type="entry name" value="4-DIPHOSPHOCYTIDYL-2-C-METHYL-D-ERYTHRITOL KINASE, CHLOROPLASTIC"/>
    <property type="match status" value="1"/>
</dbReference>
<dbReference type="Pfam" id="PF08544">
    <property type="entry name" value="GHMP_kinases_C"/>
    <property type="match status" value="1"/>
</dbReference>
<dbReference type="Pfam" id="PF00288">
    <property type="entry name" value="GHMP_kinases_N"/>
    <property type="match status" value="1"/>
</dbReference>
<dbReference type="PIRSF" id="PIRSF010376">
    <property type="entry name" value="IspE"/>
    <property type="match status" value="1"/>
</dbReference>
<dbReference type="SUPFAM" id="SSF55060">
    <property type="entry name" value="GHMP Kinase, C-terminal domain"/>
    <property type="match status" value="1"/>
</dbReference>
<dbReference type="SUPFAM" id="SSF54211">
    <property type="entry name" value="Ribosomal protein S5 domain 2-like"/>
    <property type="match status" value="1"/>
</dbReference>
<accession>A4WVE5</accession>
<organism>
    <name type="scientific">Cereibacter sphaeroides (strain ATCC 17025 / ATH 2.4.3)</name>
    <name type="common">Rhodobacter sphaeroides</name>
    <dbReference type="NCBI Taxonomy" id="349102"/>
    <lineage>
        <taxon>Bacteria</taxon>
        <taxon>Pseudomonadati</taxon>
        <taxon>Pseudomonadota</taxon>
        <taxon>Alphaproteobacteria</taxon>
        <taxon>Rhodobacterales</taxon>
        <taxon>Paracoccaceae</taxon>
        <taxon>Cereibacter</taxon>
    </lineage>
</organism>
<proteinExistence type="inferred from homology"/>